<proteinExistence type="inferred from homology"/>
<reference key="1">
    <citation type="journal article" date="2013" name="Proc. Natl. Acad. Sci. U.S.A.">
        <title>Polynucleobacter necessarius, a model for genome reduction in both free-living and symbiotic bacteria.</title>
        <authorList>
            <person name="Boscaro V."/>
            <person name="Felletti M."/>
            <person name="Vannini C."/>
            <person name="Ackerman M.S."/>
            <person name="Chain P.S."/>
            <person name="Malfatti S."/>
            <person name="Vergez L.M."/>
            <person name="Shin M."/>
            <person name="Doak T.G."/>
            <person name="Lynch M."/>
            <person name="Petroni G."/>
        </authorList>
    </citation>
    <scope>NUCLEOTIDE SEQUENCE [LARGE SCALE GENOMIC DNA]</scope>
    <source>
        <strain>STIR1</strain>
    </source>
</reference>
<name>RL15_POLNS</name>
<dbReference type="EMBL" id="CP001010">
    <property type="protein sequence ID" value="ACB43397.1"/>
    <property type="molecule type" value="Genomic_DNA"/>
</dbReference>
<dbReference type="SMR" id="B1XSS0"/>
<dbReference type="STRING" id="452638.Pnec_0069"/>
<dbReference type="KEGG" id="pne:Pnec_0069"/>
<dbReference type="eggNOG" id="COG0200">
    <property type="taxonomic scope" value="Bacteria"/>
</dbReference>
<dbReference type="HOGENOM" id="CLU_055188_4_2_4"/>
<dbReference type="OrthoDB" id="9810293at2"/>
<dbReference type="GO" id="GO:0022625">
    <property type="term" value="C:cytosolic large ribosomal subunit"/>
    <property type="evidence" value="ECO:0007669"/>
    <property type="project" value="TreeGrafter"/>
</dbReference>
<dbReference type="GO" id="GO:0019843">
    <property type="term" value="F:rRNA binding"/>
    <property type="evidence" value="ECO:0007669"/>
    <property type="project" value="UniProtKB-UniRule"/>
</dbReference>
<dbReference type="GO" id="GO:0003735">
    <property type="term" value="F:structural constituent of ribosome"/>
    <property type="evidence" value="ECO:0007669"/>
    <property type="project" value="InterPro"/>
</dbReference>
<dbReference type="GO" id="GO:0006412">
    <property type="term" value="P:translation"/>
    <property type="evidence" value="ECO:0007669"/>
    <property type="project" value="UniProtKB-UniRule"/>
</dbReference>
<dbReference type="Gene3D" id="3.100.10.10">
    <property type="match status" value="1"/>
</dbReference>
<dbReference type="HAMAP" id="MF_01341">
    <property type="entry name" value="Ribosomal_uL15"/>
    <property type="match status" value="1"/>
</dbReference>
<dbReference type="InterPro" id="IPR030878">
    <property type="entry name" value="Ribosomal_uL15"/>
</dbReference>
<dbReference type="InterPro" id="IPR021131">
    <property type="entry name" value="Ribosomal_uL15/eL18"/>
</dbReference>
<dbReference type="InterPro" id="IPR036227">
    <property type="entry name" value="Ribosomal_uL15/eL18_sf"/>
</dbReference>
<dbReference type="InterPro" id="IPR005749">
    <property type="entry name" value="Ribosomal_uL15_bac-type"/>
</dbReference>
<dbReference type="NCBIfam" id="TIGR01071">
    <property type="entry name" value="rplO_bact"/>
    <property type="match status" value="1"/>
</dbReference>
<dbReference type="PANTHER" id="PTHR12934">
    <property type="entry name" value="50S RIBOSOMAL PROTEIN L15"/>
    <property type="match status" value="1"/>
</dbReference>
<dbReference type="PANTHER" id="PTHR12934:SF11">
    <property type="entry name" value="LARGE RIBOSOMAL SUBUNIT PROTEIN UL15M"/>
    <property type="match status" value="1"/>
</dbReference>
<dbReference type="Pfam" id="PF00828">
    <property type="entry name" value="Ribosomal_L27A"/>
    <property type="match status" value="1"/>
</dbReference>
<dbReference type="SUPFAM" id="SSF52080">
    <property type="entry name" value="Ribosomal proteins L15p and L18e"/>
    <property type="match status" value="1"/>
</dbReference>
<keyword id="KW-0687">Ribonucleoprotein</keyword>
<keyword id="KW-0689">Ribosomal protein</keyword>
<keyword id="KW-0694">RNA-binding</keyword>
<keyword id="KW-0699">rRNA-binding</keyword>
<feature type="chain" id="PRO_1000142858" description="Large ribosomal subunit protein uL15">
    <location>
        <begin position="1"/>
        <end position="146"/>
    </location>
</feature>
<feature type="region of interest" description="Disordered" evidence="2">
    <location>
        <begin position="1"/>
        <end position="51"/>
    </location>
</feature>
<feature type="compositionally biased region" description="Gly residues" evidence="2">
    <location>
        <begin position="21"/>
        <end position="31"/>
    </location>
</feature>
<protein>
    <recommendedName>
        <fullName evidence="1">Large ribosomal subunit protein uL15</fullName>
    </recommendedName>
    <alternativeName>
        <fullName evidence="3">50S ribosomal protein L15</fullName>
    </alternativeName>
</protein>
<sequence length="146" mass="15412">MQLNTIKPAEGSKKNRRHVGRGIGSGLGKTAGRGHKGQKSRSGGFHKVGFEGGQMPMYRRLPKRGFVSLTRRHVGQVTLNDLAKINLPEVDLLVLKAHGFAGEQINAVKVIKTGELKIAVTLKGITATAAAKAAIEAAGGKLVELA</sequence>
<comment type="function">
    <text evidence="1">Binds to the 23S rRNA.</text>
</comment>
<comment type="subunit">
    <text evidence="1">Part of the 50S ribosomal subunit.</text>
</comment>
<comment type="similarity">
    <text evidence="1">Belongs to the universal ribosomal protein uL15 family.</text>
</comment>
<evidence type="ECO:0000255" key="1">
    <source>
        <dbReference type="HAMAP-Rule" id="MF_01341"/>
    </source>
</evidence>
<evidence type="ECO:0000256" key="2">
    <source>
        <dbReference type="SAM" id="MobiDB-lite"/>
    </source>
</evidence>
<evidence type="ECO:0000305" key="3"/>
<organism>
    <name type="scientific">Polynucleobacter necessarius subsp. necessarius (strain STIR1)</name>
    <dbReference type="NCBI Taxonomy" id="452638"/>
    <lineage>
        <taxon>Bacteria</taxon>
        <taxon>Pseudomonadati</taxon>
        <taxon>Pseudomonadota</taxon>
        <taxon>Betaproteobacteria</taxon>
        <taxon>Burkholderiales</taxon>
        <taxon>Burkholderiaceae</taxon>
        <taxon>Polynucleobacter</taxon>
    </lineage>
</organism>
<accession>B1XSS0</accession>
<gene>
    <name evidence="1" type="primary">rplO</name>
    <name type="ordered locus">Pnec_0069</name>
</gene>